<reference key="1">
    <citation type="journal article" date="1996" name="Nat. Genet.">
        <title>A novel X-linked gene, DDP, shows mutations in families with deafness (DFN-1), dystonia, mental deficiency and blindness.</title>
        <authorList>
            <person name="Jin H."/>
            <person name="May M."/>
            <person name="Tranebjaerg L."/>
            <person name="Kendall E."/>
            <person name="Fontan G."/>
            <person name="Jackson J."/>
            <person name="Subramony S.H."/>
            <person name="Arena F."/>
            <person name="Lubs H."/>
            <person name="Smith S."/>
            <person name="Stevenson R."/>
            <person name="Schwartz C."/>
            <person name="Vetrie D."/>
        </authorList>
    </citation>
    <scope>NUCLEOTIDE SEQUENCE [MRNA]</scope>
</reference>
<reference key="2">
    <citation type="journal article" date="2004" name="Nat. Genet.">
        <title>Complete sequencing and characterization of 21,243 full-length human cDNAs.</title>
        <authorList>
            <person name="Ota T."/>
            <person name="Suzuki Y."/>
            <person name="Nishikawa T."/>
            <person name="Otsuki T."/>
            <person name="Sugiyama T."/>
            <person name="Irie R."/>
            <person name="Wakamatsu A."/>
            <person name="Hayashi K."/>
            <person name="Sato H."/>
            <person name="Nagai K."/>
            <person name="Kimura K."/>
            <person name="Makita H."/>
            <person name="Sekine M."/>
            <person name="Obayashi M."/>
            <person name="Nishi T."/>
            <person name="Shibahara T."/>
            <person name="Tanaka T."/>
            <person name="Ishii S."/>
            <person name="Yamamoto J."/>
            <person name="Saito K."/>
            <person name="Kawai Y."/>
            <person name="Isono Y."/>
            <person name="Nakamura Y."/>
            <person name="Nagahari K."/>
            <person name="Murakami K."/>
            <person name="Yasuda T."/>
            <person name="Iwayanagi T."/>
            <person name="Wagatsuma M."/>
            <person name="Shiratori A."/>
            <person name="Sudo H."/>
            <person name="Hosoiri T."/>
            <person name="Kaku Y."/>
            <person name="Kodaira H."/>
            <person name="Kondo H."/>
            <person name="Sugawara M."/>
            <person name="Takahashi M."/>
            <person name="Kanda K."/>
            <person name="Yokoi T."/>
            <person name="Furuya T."/>
            <person name="Kikkawa E."/>
            <person name="Omura Y."/>
            <person name="Abe K."/>
            <person name="Kamihara K."/>
            <person name="Katsuta N."/>
            <person name="Sato K."/>
            <person name="Tanikawa M."/>
            <person name="Yamazaki M."/>
            <person name="Ninomiya K."/>
            <person name="Ishibashi T."/>
            <person name="Yamashita H."/>
            <person name="Murakawa K."/>
            <person name="Fujimori K."/>
            <person name="Tanai H."/>
            <person name="Kimata M."/>
            <person name="Watanabe M."/>
            <person name="Hiraoka S."/>
            <person name="Chiba Y."/>
            <person name="Ishida S."/>
            <person name="Ono Y."/>
            <person name="Takiguchi S."/>
            <person name="Watanabe S."/>
            <person name="Yosida M."/>
            <person name="Hotuta T."/>
            <person name="Kusano J."/>
            <person name="Kanehori K."/>
            <person name="Takahashi-Fujii A."/>
            <person name="Hara H."/>
            <person name="Tanase T.-O."/>
            <person name="Nomura Y."/>
            <person name="Togiya S."/>
            <person name="Komai F."/>
            <person name="Hara R."/>
            <person name="Takeuchi K."/>
            <person name="Arita M."/>
            <person name="Imose N."/>
            <person name="Musashino K."/>
            <person name="Yuuki H."/>
            <person name="Oshima A."/>
            <person name="Sasaki N."/>
            <person name="Aotsuka S."/>
            <person name="Yoshikawa Y."/>
            <person name="Matsunawa H."/>
            <person name="Ichihara T."/>
            <person name="Shiohata N."/>
            <person name="Sano S."/>
            <person name="Moriya S."/>
            <person name="Momiyama H."/>
            <person name="Satoh N."/>
            <person name="Takami S."/>
            <person name="Terashima Y."/>
            <person name="Suzuki O."/>
            <person name="Nakagawa S."/>
            <person name="Senoh A."/>
            <person name="Mizoguchi H."/>
            <person name="Goto Y."/>
            <person name="Shimizu F."/>
            <person name="Wakebe H."/>
            <person name="Hishigaki H."/>
            <person name="Watanabe T."/>
            <person name="Sugiyama A."/>
            <person name="Takemoto M."/>
            <person name="Kawakami B."/>
            <person name="Yamazaki M."/>
            <person name="Watanabe K."/>
            <person name="Kumagai A."/>
            <person name="Itakura S."/>
            <person name="Fukuzumi Y."/>
            <person name="Fujimori Y."/>
            <person name="Komiyama M."/>
            <person name="Tashiro H."/>
            <person name="Tanigami A."/>
            <person name="Fujiwara T."/>
            <person name="Ono T."/>
            <person name="Yamada K."/>
            <person name="Fujii Y."/>
            <person name="Ozaki K."/>
            <person name="Hirao M."/>
            <person name="Ohmori Y."/>
            <person name="Kawabata A."/>
            <person name="Hikiji T."/>
            <person name="Kobatake N."/>
            <person name="Inagaki H."/>
            <person name="Ikema Y."/>
            <person name="Okamoto S."/>
            <person name="Okitani R."/>
            <person name="Kawakami T."/>
            <person name="Noguchi S."/>
            <person name="Itoh T."/>
            <person name="Shigeta K."/>
            <person name="Senba T."/>
            <person name="Matsumura K."/>
            <person name="Nakajima Y."/>
            <person name="Mizuno T."/>
            <person name="Morinaga M."/>
            <person name="Sasaki M."/>
            <person name="Togashi T."/>
            <person name="Oyama M."/>
            <person name="Hata H."/>
            <person name="Watanabe M."/>
            <person name="Komatsu T."/>
            <person name="Mizushima-Sugano J."/>
            <person name="Satoh T."/>
            <person name="Shirai Y."/>
            <person name="Takahashi Y."/>
            <person name="Nakagawa K."/>
            <person name="Okumura K."/>
            <person name="Nagase T."/>
            <person name="Nomura N."/>
            <person name="Kikuchi H."/>
            <person name="Masuho Y."/>
            <person name="Yamashita R."/>
            <person name="Nakai K."/>
            <person name="Yada T."/>
            <person name="Nakamura Y."/>
            <person name="Ohara O."/>
            <person name="Isogai T."/>
            <person name="Sugano S."/>
        </authorList>
    </citation>
    <scope>NUCLEOTIDE SEQUENCE [LARGE SCALE MRNA]</scope>
    <source>
        <tissue>Tongue</tissue>
    </source>
</reference>
<reference key="3">
    <citation type="journal article" date="2005" name="Nature">
        <title>The DNA sequence of the human X chromosome.</title>
        <authorList>
            <person name="Ross M.T."/>
            <person name="Grafham D.V."/>
            <person name="Coffey A.J."/>
            <person name="Scherer S."/>
            <person name="McLay K."/>
            <person name="Muzny D."/>
            <person name="Platzer M."/>
            <person name="Howell G.R."/>
            <person name="Burrows C."/>
            <person name="Bird C.P."/>
            <person name="Frankish A."/>
            <person name="Lovell F.L."/>
            <person name="Howe K.L."/>
            <person name="Ashurst J.L."/>
            <person name="Fulton R.S."/>
            <person name="Sudbrak R."/>
            <person name="Wen G."/>
            <person name="Jones M.C."/>
            <person name="Hurles M.E."/>
            <person name="Andrews T.D."/>
            <person name="Scott C.E."/>
            <person name="Searle S."/>
            <person name="Ramser J."/>
            <person name="Whittaker A."/>
            <person name="Deadman R."/>
            <person name="Carter N.P."/>
            <person name="Hunt S.E."/>
            <person name="Chen R."/>
            <person name="Cree A."/>
            <person name="Gunaratne P."/>
            <person name="Havlak P."/>
            <person name="Hodgson A."/>
            <person name="Metzker M.L."/>
            <person name="Richards S."/>
            <person name="Scott G."/>
            <person name="Steffen D."/>
            <person name="Sodergren E."/>
            <person name="Wheeler D.A."/>
            <person name="Worley K.C."/>
            <person name="Ainscough R."/>
            <person name="Ambrose K.D."/>
            <person name="Ansari-Lari M.A."/>
            <person name="Aradhya S."/>
            <person name="Ashwell R.I."/>
            <person name="Babbage A.K."/>
            <person name="Bagguley C.L."/>
            <person name="Ballabio A."/>
            <person name="Banerjee R."/>
            <person name="Barker G.E."/>
            <person name="Barlow K.F."/>
            <person name="Barrett I.P."/>
            <person name="Bates K.N."/>
            <person name="Beare D.M."/>
            <person name="Beasley H."/>
            <person name="Beasley O."/>
            <person name="Beck A."/>
            <person name="Bethel G."/>
            <person name="Blechschmidt K."/>
            <person name="Brady N."/>
            <person name="Bray-Allen S."/>
            <person name="Bridgeman A.M."/>
            <person name="Brown A.J."/>
            <person name="Brown M.J."/>
            <person name="Bonnin D."/>
            <person name="Bruford E.A."/>
            <person name="Buhay C."/>
            <person name="Burch P."/>
            <person name="Burford D."/>
            <person name="Burgess J."/>
            <person name="Burrill W."/>
            <person name="Burton J."/>
            <person name="Bye J.M."/>
            <person name="Carder C."/>
            <person name="Carrel L."/>
            <person name="Chako J."/>
            <person name="Chapman J.C."/>
            <person name="Chavez D."/>
            <person name="Chen E."/>
            <person name="Chen G."/>
            <person name="Chen Y."/>
            <person name="Chen Z."/>
            <person name="Chinault C."/>
            <person name="Ciccodicola A."/>
            <person name="Clark S.Y."/>
            <person name="Clarke G."/>
            <person name="Clee C.M."/>
            <person name="Clegg S."/>
            <person name="Clerc-Blankenburg K."/>
            <person name="Clifford K."/>
            <person name="Cobley V."/>
            <person name="Cole C.G."/>
            <person name="Conquer J.S."/>
            <person name="Corby N."/>
            <person name="Connor R.E."/>
            <person name="David R."/>
            <person name="Davies J."/>
            <person name="Davis C."/>
            <person name="Davis J."/>
            <person name="Delgado O."/>
            <person name="Deshazo D."/>
            <person name="Dhami P."/>
            <person name="Ding Y."/>
            <person name="Dinh H."/>
            <person name="Dodsworth S."/>
            <person name="Draper H."/>
            <person name="Dugan-Rocha S."/>
            <person name="Dunham A."/>
            <person name="Dunn M."/>
            <person name="Durbin K.J."/>
            <person name="Dutta I."/>
            <person name="Eades T."/>
            <person name="Ellwood M."/>
            <person name="Emery-Cohen A."/>
            <person name="Errington H."/>
            <person name="Evans K.L."/>
            <person name="Faulkner L."/>
            <person name="Francis F."/>
            <person name="Frankland J."/>
            <person name="Fraser A.E."/>
            <person name="Galgoczy P."/>
            <person name="Gilbert J."/>
            <person name="Gill R."/>
            <person name="Gloeckner G."/>
            <person name="Gregory S.G."/>
            <person name="Gribble S."/>
            <person name="Griffiths C."/>
            <person name="Grocock R."/>
            <person name="Gu Y."/>
            <person name="Gwilliam R."/>
            <person name="Hamilton C."/>
            <person name="Hart E.A."/>
            <person name="Hawes A."/>
            <person name="Heath P.D."/>
            <person name="Heitmann K."/>
            <person name="Hennig S."/>
            <person name="Hernandez J."/>
            <person name="Hinzmann B."/>
            <person name="Ho S."/>
            <person name="Hoffs M."/>
            <person name="Howden P.J."/>
            <person name="Huckle E.J."/>
            <person name="Hume J."/>
            <person name="Hunt P.J."/>
            <person name="Hunt A.R."/>
            <person name="Isherwood J."/>
            <person name="Jacob L."/>
            <person name="Johnson D."/>
            <person name="Jones S."/>
            <person name="de Jong P.J."/>
            <person name="Joseph S.S."/>
            <person name="Keenan S."/>
            <person name="Kelly S."/>
            <person name="Kershaw J.K."/>
            <person name="Khan Z."/>
            <person name="Kioschis P."/>
            <person name="Klages S."/>
            <person name="Knights A.J."/>
            <person name="Kosiura A."/>
            <person name="Kovar-Smith C."/>
            <person name="Laird G.K."/>
            <person name="Langford C."/>
            <person name="Lawlor S."/>
            <person name="Leversha M."/>
            <person name="Lewis L."/>
            <person name="Liu W."/>
            <person name="Lloyd C."/>
            <person name="Lloyd D.M."/>
            <person name="Loulseged H."/>
            <person name="Loveland J.E."/>
            <person name="Lovell J.D."/>
            <person name="Lozado R."/>
            <person name="Lu J."/>
            <person name="Lyne R."/>
            <person name="Ma J."/>
            <person name="Maheshwari M."/>
            <person name="Matthews L.H."/>
            <person name="McDowall J."/>
            <person name="McLaren S."/>
            <person name="McMurray A."/>
            <person name="Meidl P."/>
            <person name="Meitinger T."/>
            <person name="Milne S."/>
            <person name="Miner G."/>
            <person name="Mistry S.L."/>
            <person name="Morgan M."/>
            <person name="Morris S."/>
            <person name="Mueller I."/>
            <person name="Mullikin J.C."/>
            <person name="Nguyen N."/>
            <person name="Nordsiek G."/>
            <person name="Nyakatura G."/>
            <person name="O'dell C.N."/>
            <person name="Okwuonu G."/>
            <person name="Palmer S."/>
            <person name="Pandian R."/>
            <person name="Parker D."/>
            <person name="Parrish J."/>
            <person name="Pasternak S."/>
            <person name="Patel D."/>
            <person name="Pearce A.V."/>
            <person name="Pearson D.M."/>
            <person name="Pelan S.E."/>
            <person name="Perez L."/>
            <person name="Porter K.M."/>
            <person name="Ramsey Y."/>
            <person name="Reichwald K."/>
            <person name="Rhodes S."/>
            <person name="Ridler K.A."/>
            <person name="Schlessinger D."/>
            <person name="Schueler M.G."/>
            <person name="Sehra H.K."/>
            <person name="Shaw-Smith C."/>
            <person name="Shen H."/>
            <person name="Sheridan E.M."/>
            <person name="Shownkeen R."/>
            <person name="Skuce C.D."/>
            <person name="Smith M.L."/>
            <person name="Sotheran E.C."/>
            <person name="Steingruber H.E."/>
            <person name="Steward C.A."/>
            <person name="Storey R."/>
            <person name="Swann R.M."/>
            <person name="Swarbreck D."/>
            <person name="Tabor P.E."/>
            <person name="Taudien S."/>
            <person name="Taylor T."/>
            <person name="Teague B."/>
            <person name="Thomas K."/>
            <person name="Thorpe A."/>
            <person name="Timms K."/>
            <person name="Tracey A."/>
            <person name="Trevanion S."/>
            <person name="Tromans A.C."/>
            <person name="d'Urso M."/>
            <person name="Verduzco D."/>
            <person name="Villasana D."/>
            <person name="Waldron L."/>
            <person name="Wall M."/>
            <person name="Wang Q."/>
            <person name="Warren J."/>
            <person name="Warry G.L."/>
            <person name="Wei X."/>
            <person name="West A."/>
            <person name="Whitehead S.L."/>
            <person name="Whiteley M.N."/>
            <person name="Wilkinson J.E."/>
            <person name="Willey D.L."/>
            <person name="Williams G."/>
            <person name="Williams L."/>
            <person name="Williamson A."/>
            <person name="Williamson H."/>
            <person name="Wilming L."/>
            <person name="Woodmansey R.L."/>
            <person name="Wray P.W."/>
            <person name="Yen J."/>
            <person name="Zhang J."/>
            <person name="Zhou J."/>
            <person name="Zoghbi H."/>
            <person name="Zorilla S."/>
            <person name="Buck D."/>
            <person name="Reinhardt R."/>
            <person name="Poustka A."/>
            <person name="Rosenthal A."/>
            <person name="Lehrach H."/>
            <person name="Meindl A."/>
            <person name="Minx P.J."/>
            <person name="Hillier L.W."/>
            <person name="Willard H.F."/>
            <person name="Wilson R.K."/>
            <person name="Waterston R.H."/>
            <person name="Rice C.M."/>
            <person name="Vaudin M."/>
            <person name="Coulson A."/>
            <person name="Nelson D.L."/>
            <person name="Weinstock G."/>
            <person name="Sulston J.E."/>
            <person name="Durbin R.M."/>
            <person name="Hubbard T."/>
            <person name="Gibbs R.A."/>
            <person name="Beck S."/>
            <person name="Rogers J."/>
            <person name="Bentley D.R."/>
        </authorList>
    </citation>
    <scope>NUCLEOTIDE SEQUENCE [LARGE SCALE GENOMIC DNA]</scope>
</reference>
<reference key="4">
    <citation type="submission" date="2005-07" db="EMBL/GenBank/DDBJ databases">
        <authorList>
            <person name="Mural R.J."/>
            <person name="Istrail S."/>
            <person name="Sutton G.G."/>
            <person name="Florea L."/>
            <person name="Halpern A.L."/>
            <person name="Mobarry C.M."/>
            <person name="Lippert R."/>
            <person name="Walenz B."/>
            <person name="Shatkay H."/>
            <person name="Dew I."/>
            <person name="Miller J.R."/>
            <person name="Flanigan M.J."/>
            <person name="Edwards N.J."/>
            <person name="Bolanos R."/>
            <person name="Fasulo D."/>
            <person name="Halldorsson B.V."/>
            <person name="Hannenhalli S."/>
            <person name="Turner R."/>
            <person name="Yooseph S."/>
            <person name="Lu F."/>
            <person name="Nusskern D.R."/>
            <person name="Shue B.C."/>
            <person name="Zheng X.H."/>
            <person name="Zhong F."/>
            <person name="Delcher A.L."/>
            <person name="Huson D.H."/>
            <person name="Kravitz S.A."/>
            <person name="Mouchard L."/>
            <person name="Reinert K."/>
            <person name="Remington K.A."/>
            <person name="Clark A.G."/>
            <person name="Waterman M.S."/>
            <person name="Eichler E.E."/>
            <person name="Adams M.D."/>
            <person name="Hunkapiller M.W."/>
            <person name="Myers E.W."/>
            <person name="Venter J.C."/>
        </authorList>
    </citation>
    <scope>NUCLEOTIDE SEQUENCE [LARGE SCALE GENOMIC DNA]</scope>
</reference>
<reference key="5">
    <citation type="journal article" date="2004" name="Genome Res.">
        <title>The status, quality, and expansion of the NIH full-length cDNA project: the Mammalian Gene Collection (MGC).</title>
        <authorList>
            <consortium name="The MGC Project Team"/>
        </authorList>
    </citation>
    <scope>NUCLEOTIDE SEQUENCE [LARGE SCALE MRNA]</scope>
    <source>
        <tissue>Brain</tissue>
        <tissue>Kidney</tissue>
        <tissue>Urinary bladder</tissue>
    </source>
</reference>
<reference key="6">
    <citation type="journal article" date="1999" name="Proc. Natl. Acad. Sci. U.S.A.">
        <title>Human deafness dystonia syndrome is a mitochondrial disease.</title>
        <authorList>
            <person name="Koehler C.M."/>
            <person name="Leuenberger D."/>
            <person name="Merchant S."/>
            <person name="Renold A."/>
            <person name="Junne T."/>
            <person name="Schatz G."/>
        </authorList>
    </citation>
    <scope>PROBABLE FUNCTION</scope>
</reference>
<reference key="7">
    <citation type="journal article" date="1999" name="Proc. Natl. Acad. Sci. U.S.A.">
        <title>Mitochondria and dystonia: the movement disorder connection?</title>
        <authorList>
            <person name="Wallace D.C."/>
            <person name="Murdock D.G."/>
        </authorList>
    </citation>
    <scope>PROBABLE FUNCTION</scope>
</reference>
<reference key="8">
    <citation type="journal article" date="2001" name="J. Biol. Chem.">
        <title>Role of the deafness dystonia peptide 1 (DDP1) in import of human Tim23 into the inner membrane of mitochondria.</title>
        <authorList>
            <person name="Rothbauer U."/>
            <person name="Hofmann S."/>
            <person name="Muehlenbein N."/>
            <person name="Paschen S.A."/>
            <person name="Gerbitz K.-D."/>
            <person name="Neupert W."/>
            <person name="Brunner M."/>
            <person name="Bauer M.F."/>
        </authorList>
    </citation>
    <scope>FUNCTION</scope>
    <scope>SUBCELLULAR LOCATION</scope>
    <scope>ZINC-BINDING</scope>
    <scope>INTERACTION WITH TIMM13</scope>
</reference>
<reference key="9">
    <citation type="journal article" date="2004" name="Hum. Mol. Genet.">
        <title>The calcium-binding aspartate/glutamate carriers, citrin and aralar1, are new substrates for the DDP1/TIMM8a-TIMM13 complex.</title>
        <authorList>
            <person name="Roesch K."/>
            <person name="Hynds P.J."/>
            <person name="Varga R."/>
            <person name="Tranebjaerg L."/>
            <person name="Koehler C.M."/>
        </authorList>
    </citation>
    <scope>FUNCTION</scope>
</reference>
<reference key="10">
    <citation type="journal article" date="2001" name="Ophthalmic Genet.">
        <title>Neuronal cell death in the visual cortex is a prominent feature of the X-linked recessive mitochondrial deafness-dystonia syndrome caused by mutations in the TIMM8a gene.</title>
        <authorList>
            <person name="Tranebjaerg L."/>
            <person name="Jensen P.K."/>
            <person name="Van Ghelue M."/>
            <person name="Vnencak-Jones C.L."/>
            <person name="Sund S."/>
            <person name="Elgjo K."/>
            <person name="Jakobsen J."/>
            <person name="Lindal S."/>
            <person name="Warburg M."/>
            <person name="Fuglsang-Frederiksen A."/>
            <person name="Skullerud K."/>
        </authorList>
    </citation>
    <scope>INVOLVEMENT IN MTS</scope>
</reference>
<reference key="11">
    <citation type="journal article" date="2008" name="Proc. Natl. Acad. Sci. U.S.A.">
        <title>A quantitative atlas of mitotic phosphorylation.</title>
        <authorList>
            <person name="Dephoure N."/>
            <person name="Zhou C."/>
            <person name="Villen J."/>
            <person name="Beausoleil S.A."/>
            <person name="Bakalarski C.E."/>
            <person name="Elledge S.J."/>
            <person name="Gygi S.P."/>
        </authorList>
    </citation>
    <scope>PHOSPHORYLATION [LARGE SCALE ANALYSIS] AT SER-94</scope>
    <scope>IDENTIFICATION BY MASS SPECTROMETRY [LARGE SCALE ANALYSIS]</scope>
    <source>
        <tissue>Cervix carcinoma</tissue>
    </source>
</reference>
<reference key="12">
    <citation type="journal article" date="2011" name="BMC Syst. Biol.">
        <title>Initial characterization of the human central proteome.</title>
        <authorList>
            <person name="Burkard T.R."/>
            <person name="Planyavsky M."/>
            <person name="Kaupe I."/>
            <person name="Breitwieser F.P."/>
            <person name="Buerckstuemmer T."/>
            <person name="Bennett K.L."/>
            <person name="Superti-Furga G."/>
            <person name="Colinge J."/>
        </authorList>
    </citation>
    <scope>IDENTIFICATION BY MASS SPECTROMETRY [LARGE SCALE ANALYSIS]</scope>
</reference>
<reference key="13">
    <citation type="journal article" date="2011" name="Sci. Signal.">
        <title>System-wide temporal characterization of the proteome and phosphoproteome of human embryonic stem cell differentiation.</title>
        <authorList>
            <person name="Rigbolt K.T."/>
            <person name="Prokhorova T.A."/>
            <person name="Akimov V."/>
            <person name="Henningsen J."/>
            <person name="Johansen P.T."/>
            <person name="Kratchmarova I."/>
            <person name="Kassem M."/>
            <person name="Mann M."/>
            <person name="Olsen J.V."/>
            <person name="Blagoev B."/>
        </authorList>
    </citation>
    <scope>PHOSPHORYLATION [LARGE SCALE ANALYSIS] AT SER-96</scope>
    <scope>IDENTIFICATION BY MASS SPECTROMETRY [LARGE SCALE ANALYSIS]</scope>
</reference>
<reference key="14">
    <citation type="journal article" date="2013" name="J. Proteome Res.">
        <title>Toward a comprehensive characterization of a human cancer cell phosphoproteome.</title>
        <authorList>
            <person name="Zhou H."/>
            <person name="Di Palma S."/>
            <person name="Preisinger C."/>
            <person name="Peng M."/>
            <person name="Polat A.N."/>
            <person name="Heck A.J."/>
            <person name="Mohammed S."/>
        </authorList>
    </citation>
    <scope>PHOSPHORYLATION [LARGE SCALE ANALYSIS] AT SER-96</scope>
    <scope>IDENTIFICATION BY MASS SPECTROMETRY [LARGE SCALE ANALYSIS]</scope>
    <source>
        <tissue>Cervix carcinoma</tissue>
        <tissue>Erythroleukemia</tissue>
    </source>
</reference>
<reference key="15">
    <citation type="journal article" date="2014" name="J. Proteomics">
        <title>An enzyme assisted RP-RPLC approach for in-depth analysis of human liver phosphoproteome.</title>
        <authorList>
            <person name="Bian Y."/>
            <person name="Song C."/>
            <person name="Cheng K."/>
            <person name="Dong M."/>
            <person name="Wang F."/>
            <person name="Huang J."/>
            <person name="Sun D."/>
            <person name="Wang L."/>
            <person name="Ye M."/>
            <person name="Zou H."/>
        </authorList>
    </citation>
    <scope>IDENTIFICATION BY MASS SPECTROMETRY [LARGE SCALE ANALYSIS]</scope>
    <source>
        <tissue>Liver</tissue>
    </source>
</reference>
<reference key="16">
    <citation type="journal article" date="2000" name="Eur. J. Hum. Genet.">
        <title>A de novo missense mutation in a critical domain of the X-linked DDP gene causes the typical deafness-dystonia-optic atrophy syndrome.</title>
        <authorList>
            <person name="Tranebjaerg L."/>
            <person name="Hamel B.C.J."/>
            <person name="Gabreels F.J.M."/>
            <person name="Renier W.O."/>
            <person name="Van Ghelue M."/>
        </authorList>
    </citation>
    <scope>VARIANT MTS TRP-66</scope>
</reference>
<reference key="17">
    <citation type="journal article" date="2002" name="Hum. Mol. Genet.">
        <title>Human deafness dystonia syndrome is caused by a defect in assembly of the DDP1/TIMM8a-TIMM13 complex.</title>
        <authorList>
            <person name="Roesch K."/>
            <person name="Curran S.P."/>
            <person name="Tranebjaerg L."/>
            <person name="Koehler C.M."/>
        </authorList>
    </citation>
    <scope>VARIANT MTS TRP-66</scope>
</reference>
<reference key="18">
    <citation type="journal article" date="2002" name="J. Biol. Chem.">
        <title>The C66W mutation in the deafness dystonia peptide 1 (DDP1) affects the formation of functional DDP1.TIM13 complexes in the mitochondrial intermembrane space.</title>
        <authorList>
            <person name="Hofmann S."/>
            <person name="Rothbauer U."/>
            <person name="Muehlenbein N."/>
            <person name="Neupert W."/>
            <person name="Gerbitz K.-D."/>
            <person name="Brunner M."/>
            <person name="Bauer M.F."/>
        </authorList>
    </citation>
    <scope>VARIANT MTS TRP-66</scope>
</reference>
<evidence type="ECO:0000250" key="1"/>
<evidence type="ECO:0000250" key="2">
    <source>
        <dbReference type="UniProtKB" id="Q9WVA2"/>
    </source>
</evidence>
<evidence type="ECO:0000269" key="3">
    <source>
    </source>
</evidence>
<evidence type="ECO:0000269" key="4">
    <source>
    </source>
</evidence>
<evidence type="ECO:0000269" key="5">
    <source>
    </source>
</evidence>
<evidence type="ECO:0000269" key="6">
    <source>
    </source>
</evidence>
<evidence type="ECO:0000269" key="7">
    <source>
    </source>
</evidence>
<evidence type="ECO:0000269" key="8">
    <source>
    </source>
</evidence>
<evidence type="ECO:0000305" key="9"/>
<evidence type="ECO:0007744" key="10">
    <source>
    </source>
</evidence>
<evidence type="ECO:0007744" key="11">
    <source>
    </source>
</evidence>
<evidence type="ECO:0007744" key="12">
    <source>
    </source>
</evidence>
<gene>
    <name type="primary">TIMM8A</name>
    <name type="synonym">DDP</name>
    <name type="synonym">DDP1</name>
    <name type="synonym">TIM8A</name>
</gene>
<accession>O60220</accession>
<accession>B2R5A6</accession>
<accession>Q6IRW6</accession>
<protein>
    <recommendedName>
        <fullName>Mitochondrial import inner membrane translocase subunit Tim8 A</fullName>
    </recommendedName>
    <alternativeName>
        <fullName>Deafness dystonia protein 1</fullName>
    </alternativeName>
    <alternativeName>
        <fullName>X-linked deafness dystonia protein</fullName>
    </alternativeName>
</protein>
<name>TIM8A_HUMAN</name>
<organism>
    <name type="scientific">Homo sapiens</name>
    <name type="common">Human</name>
    <dbReference type="NCBI Taxonomy" id="9606"/>
    <lineage>
        <taxon>Eukaryota</taxon>
        <taxon>Metazoa</taxon>
        <taxon>Chordata</taxon>
        <taxon>Craniata</taxon>
        <taxon>Vertebrata</taxon>
        <taxon>Euteleostomi</taxon>
        <taxon>Mammalia</taxon>
        <taxon>Eutheria</taxon>
        <taxon>Euarchontoglires</taxon>
        <taxon>Primates</taxon>
        <taxon>Haplorrhini</taxon>
        <taxon>Catarrhini</taxon>
        <taxon>Hominidae</taxon>
        <taxon>Homo</taxon>
    </lineage>
</organism>
<comment type="function">
    <text evidence="4 8">Mitochondrial intermembrane chaperone that participates in the import and insertion of some multi-pass transmembrane proteins into the mitochondrial inner membrane. Also required for the transfer of beta-barrel precursors from the TOM complex to the sorting and assembly machinery (SAM complex) of the outer membrane. Acts as a chaperone-like protein that protects the hydrophobic precursors from aggregation and guide them through the mitochondrial intermembrane space. The TIMM8-TIMM13 complex mediates the import of proteins such as TIMM23, SLC25A12/ARALAR1 and SLC25A13/ARALAR2, while the predominant TIMM9-TIMM10 70 kDa complex mediates the import of much more proteins. Probably necessary for normal neurologic development.</text>
</comment>
<comment type="subunit">
    <text>Heterohexamer; composed of 3 copies of TIMM8A and 3 copies of TIMM13, named soluble 70 kDa complex. Associates with the TIM22 complex, whose core is composed of TIMM22.</text>
</comment>
<comment type="interaction">
    <interactant intactId="EBI-1049822">
        <id>O60220</id>
    </interactant>
    <interactant intactId="EBI-5458244">
        <id>Q99856</id>
        <label>ARID3A</label>
    </interactant>
    <organismsDiffer>false</organismsDiffer>
    <experiments>3</experiments>
</comment>
<comment type="interaction">
    <interactant intactId="EBI-1049822">
        <id>O60220</id>
    </interactant>
    <interactant intactId="EBI-2837444">
        <id>Q8WUW1</id>
        <label>BRK1</label>
    </interactant>
    <organismsDiffer>false</organismsDiffer>
    <experiments>3</experiments>
</comment>
<comment type="interaction">
    <interactant intactId="EBI-1049822">
        <id>O60220</id>
    </interactant>
    <interactant intactId="EBI-2817707">
        <id>Q9BXJ5</id>
        <label>C1QTNF2</label>
    </interactant>
    <organismsDiffer>false</organismsDiffer>
    <experiments>3</experiments>
</comment>
<comment type="interaction">
    <interactant intactId="EBI-1049822">
        <id>O60220</id>
    </interactant>
    <interactant intactId="EBI-3893101">
        <id>Q969G5</id>
        <label>CAVIN3</label>
    </interactant>
    <organismsDiffer>false</organismsDiffer>
    <experiments>3</experiments>
</comment>
<comment type="interaction">
    <interactant intactId="EBI-1049822">
        <id>O60220</id>
    </interactant>
    <interactant intactId="EBI-355710">
        <id>P48643</id>
        <label>CCT5</label>
    </interactant>
    <organismsDiffer>false</organismsDiffer>
    <experiments>3</experiments>
</comment>
<comment type="interaction">
    <interactant intactId="EBI-1049822">
        <id>O60220</id>
    </interactant>
    <interactant intactId="EBI-1955541">
        <id>Q53GS7</id>
        <label>GLE1</label>
    </interactant>
    <organismsDiffer>false</organismsDiffer>
    <experiments>3</experiments>
</comment>
<comment type="interaction">
    <interactant intactId="EBI-1049822">
        <id>O60220</id>
    </interactant>
    <interactant intactId="EBI-466029">
        <id>P42858</id>
        <label>HTT</label>
    </interactant>
    <organismsDiffer>false</organismsDiffer>
    <experiments>15</experiments>
</comment>
<comment type="interaction">
    <interactant intactId="EBI-1049822">
        <id>O60220</id>
    </interactant>
    <interactant intactId="EBI-739566">
        <id>P19012</id>
        <label>KRT15</label>
    </interactant>
    <organismsDiffer>false</organismsDiffer>
    <experiments>3</experiments>
</comment>
<comment type="interaction">
    <interactant intactId="EBI-1049822">
        <id>O60220</id>
    </interactant>
    <interactant intactId="EBI-536879">
        <id>O43482</id>
        <label>OIP5</label>
    </interactant>
    <organismsDiffer>false</organismsDiffer>
    <experiments>3</experiments>
</comment>
<comment type="interaction">
    <interactant intactId="EBI-1049822">
        <id>O60220</id>
    </interactant>
    <interactant intactId="EBI-5235340">
        <id>Q7Z699</id>
        <label>SPRED1</label>
    </interactant>
    <organismsDiffer>false</organismsDiffer>
    <experiments>3</experiments>
</comment>
<comment type="interaction">
    <interactant intactId="EBI-1049822">
        <id>O60220</id>
    </interactant>
    <interactant intactId="EBI-373258">
        <id>O75886</id>
        <label>STAM2</label>
    </interactant>
    <organismsDiffer>false</organismsDiffer>
    <experiments>9</experiments>
</comment>
<comment type="interaction">
    <interactant intactId="EBI-1049822">
        <id>O60220</id>
    </interactant>
    <interactant intactId="EBI-1057344">
        <id>Q9Y5L4</id>
        <label>TIMM13</label>
    </interactant>
    <organismsDiffer>false</organismsDiffer>
    <experiments>3</experiments>
</comment>
<comment type="interaction">
    <interactant intactId="EBI-1049822">
        <id>O60220</id>
    </interactant>
    <interactant intactId="EBI-1049822">
        <id>O60220</id>
        <label>TIMM8A</label>
    </interactant>
    <organismsDiffer>false</organismsDiffer>
    <experiments>6</experiments>
</comment>
<comment type="interaction">
    <interactant intactId="EBI-1049822">
        <id>O60220</id>
    </interactant>
    <interactant intactId="EBI-720609">
        <id>O76024</id>
        <label>WFS1</label>
    </interactant>
    <organismsDiffer>false</organismsDiffer>
    <experiments>3</experiments>
</comment>
<comment type="subcellular location">
    <subcellularLocation>
        <location evidence="4">Mitochondrion inner membrane</location>
        <topology evidence="4">Peripheral membrane protein</topology>
        <orientation evidence="4">Intermembrane side</orientation>
    </subcellularLocation>
</comment>
<comment type="tissue specificity">
    <text>Highly expressed in fetal and adult brain, followed by fetal lung, liver and kidney. Also expressed in heart, placenta, lung, liver, kidney, pancreas, skeletal muscle and heart.</text>
</comment>
<comment type="domain">
    <text evidence="1">The twin CX3C motif contains 4 conserved Cys residues that form 2 disulfide bonds in the mitochondrial intermembrane space. However, during the transit of TIMM8A from cytoplasm into mitochondrion, the Cys residues probably coordinate zinc, thereby preventing folding and allowing its transfer across mitochondrial outer membrane (By similarity).</text>
</comment>
<comment type="disease" evidence="3 5 6 7">
    <disease id="DI-01988">
        <name>Mohr-Tranebjaerg syndrome</name>
        <acronym>MTS</acronym>
        <description>An X-linked recessive disorder characterized by postlingual sensorineural deafness with onset in early childhood, dystonia, spasticity, dysphagia, mental deterioration, paranoia and cortical blindness.</description>
        <dbReference type="MIM" id="304700"/>
    </disease>
    <text>The disease is caused by variants affecting the gene represented in this entry.</text>
</comment>
<comment type="similarity">
    <text evidence="9">Belongs to the small Tim family.</text>
</comment>
<feature type="chain" id="PRO_0000193584" description="Mitochondrial import inner membrane translocase subunit Tim8 A">
    <location>
        <begin position="1"/>
        <end position="97"/>
    </location>
</feature>
<feature type="short sequence motif" description="Twin CX3C motif">
    <location>
        <begin position="43"/>
        <end position="66"/>
    </location>
</feature>
<feature type="modified residue" description="Phosphoserine" evidence="2">
    <location>
        <position position="57"/>
    </location>
</feature>
<feature type="modified residue" description="Phosphoserine" evidence="2">
    <location>
        <position position="87"/>
    </location>
</feature>
<feature type="modified residue" description="Phosphoserine" evidence="10">
    <location>
        <position position="94"/>
    </location>
</feature>
<feature type="modified residue" description="Phosphoserine" evidence="11 12">
    <location>
        <position position="96"/>
    </location>
</feature>
<feature type="disulfide bond" evidence="1">
    <location>
        <begin position="43"/>
        <end position="66"/>
    </location>
</feature>
<feature type="disulfide bond" evidence="1">
    <location>
        <begin position="47"/>
        <end position="62"/>
    </location>
</feature>
<feature type="sequence variant" id="VAR_010237" description="In MTS; disrupts the assembly of the heterohexamer with TIMM13; dbSNP:rs80356560." evidence="3 6 7">
    <original>C</original>
    <variation>W</variation>
    <location>
        <position position="66"/>
    </location>
</feature>
<feature type="sequence conflict" description="In Ref. 5; AAH70284." evidence="9" ref="5">
    <original>C</original>
    <variation>R</variation>
    <location>
        <position position="62"/>
    </location>
</feature>
<keyword id="KW-0143">Chaperone</keyword>
<keyword id="KW-0209">Deafness</keyword>
<keyword id="KW-0225">Disease variant</keyword>
<keyword id="KW-1015">Disulfide bond</keyword>
<keyword id="KW-1023">Dystonia</keyword>
<keyword id="KW-0472">Membrane</keyword>
<keyword id="KW-0479">Metal-binding</keyword>
<keyword id="KW-0496">Mitochondrion</keyword>
<keyword id="KW-0999">Mitochondrion inner membrane</keyword>
<keyword id="KW-0597">Phosphoprotein</keyword>
<keyword id="KW-0653">Protein transport</keyword>
<keyword id="KW-1267">Proteomics identification</keyword>
<keyword id="KW-1185">Reference proteome</keyword>
<keyword id="KW-0811">Translocation</keyword>
<keyword id="KW-0813">Transport</keyword>
<keyword id="KW-0862">Zinc</keyword>
<proteinExistence type="evidence at protein level"/>
<dbReference type="EMBL" id="U66035">
    <property type="protein sequence ID" value="AAC15946.1"/>
    <property type="molecule type" value="mRNA"/>
</dbReference>
<dbReference type="EMBL" id="AK312117">
    <property type="protein sequence ID" value="BAG35053.1"/>
    <property type="molecule type" value="mRNA"/>
</dbReference>
<dbReference type="EMBL" id="AL035422">
    <property type="status" value="NOT_ANNOTATED_CDS"/>
    <property type="molecule type" value="Genomic_DNA"/>
</dbReference>
<dbReference type="EMBL" id="CH471115">
    <property type="protein sequence ID" value="EAX02854.1"/>
    <property type="molecule type" value="Genomic_DNA"/>
</dbReference>
<dbReference type="EMBL" id="BC006994">
    <property type="protein sequence ID" value="AAH06994.1"/>
    <property type="molecule type" value="mRNA"/>
</dbReference>
<dbReference type="EMBL" id="BC015093">
    <property type="protein sequence ID" value="AAH15093.1"/>
    <property type="molecule type" value="mRNA"/>
</dbReference>
<dbReference type="EMBL" id="BC070284">
    <property type="protein sequence ID" value="AAH70284.1"/>
    <property type="molecule type" value="mRNA"/>
</dbReference>
<dbReference type="CCDS" id="CCDS14481.1"/>
<dbReference type="RefSeq" id="NP_004076.1">
    <property type="nucleotide sequence ID" value="NM_004085.4"/>
</dbReference>
<dbReference type="SMR" id="O60220"/>
<dbReference type="BioGRID" id="108042">
    <property type="interactions" value="93"/>
</dbReference>
<dbReference type="ComplexPortal" id="CPX-6131">
    <property type="entry name" value="TIM8A-TIM13 mitochondrial intermembrane space protein transporter complex"/>
</dbReference>
<dbReference type="CORUM" id="O60220"/>
<dbReference type="FunCoup" id="O60220">
    <property type="interactions" value="1551"/>
</dbReference>
<dbReference type="IntAct" id="O60220">
    <property type="interactions" value="71"/>
</dbReference>
<dbReference type="MINT" id="O60220"/>
<dbReference type="STRING" id="9606.ENSP00000361993"/>
<dbReference type="GlyGen" id="O60220">
    <property type="glycosylation" value="1 site, 1 O-linked glycan (1 site)"/>
</dbReference>
<dbReference type="iPTMnet" id="O60220"/>
<dbReference type="PhosphoSitePlus" id="O60220"/>
<dbReference type="BioMuta" id="TIMM8A"/>
<dbReference type="jPOST" id="O60220"/>
<dbReference type="MassIVE" id="O60220"/>
<dbReference type="PaxDb" id="9606-ENSP00000361993"/>
<dbReference type="PeptideAtlas" id="O60220"/>
<dbReference type="ProteomicsDB" id="49248"/>
<dbReference type="Pumba" id="O60220"/>
<dbReference type="TopDownProteomics" id="O60220"/>
<dbReference type="Antibodypedia" id="584">
    <property type="antibodies" value="142 antibodies from 27 providers"/>
</dbReference>
<dbReference type="DNASU" id="1678"/>
<dbReference type="Ensembl" id="ENST00000372902.4">
    <property type="protein sequence ID" value="ENSP00000361993.3"/>
    <property type="gene ID" value="ENSG00000126953.8"/>
</dbReference>
<dbReference type="GeneID" id="1678"/>
<dbReference type="KEGG" id="hsa:1678"/>
<dbReference type="MANE-Select" id="ENST00000372902.4">
    <property type="protein sequence ID" value="ENSP00000361993.3"/>
    <property type="RefSeq nucleotide sequence ID" value="NM_004085.4"/>
    <property type="RefSeq protein sequence ID" value="NP_004076.1"/>
</dbReference>
<dbReference type="UCSC" id="uc004ehd.3">
    <property type="organism name" value="human"/>
</dbReference>
<dbReference type="AGR" id="HGNC:11817"/>
<dbReference type="CTD" id="1678"/>
<dbReference type="DisGeNET" id="1678"/>
<dbReference type="GeneCards" id="TIMM8A"/>
<dbReference type="GeneReviews" id="TIMM8A"/>
<dbReference type="HGNC" id="HGNC:11817">
    <property type="gene designation" value="TIMM8A"/>
</dbReference>
<dbReference type="HPA" id="ENSG00000126953">
    <property type="expression patterns" value="Low tissue specificity"/>
</dbReference>
<dbReference type="MalaCards" id="TIMM8A"/>
<dbReference type="MIM" id="300356">
    <property type="type" value="gene"/>
</dbReference>
<dbReference type="MIM" id="304700">
    <property type="type" value="phenotype"/>
</dbReference>
<dbReference type="neXtProt" id="NX_O60220"/>
<dbReference type="OpenTargets" id="ENSG00000126953"/>
<dbReference type="Orphanet" id="52368">
    <property type="disease" value="Mohr-Tranebjaerg syndrome"/>
</dbReference>
<dbReference type="PharmGKB" id="PA36523"/>
<dbReference type="VEuPathDB" id="HostDB:ENSG00000126953"/>
<dbReference type="eggNOG" id="KOG3489">
    <property type="taxonomic scope" value="Eukaryota"/>
</dbReference>
<dbReference type="GeneTree" id="ENSGT00940000154661"/>
<dbReference type="HOGENOM" id="CLU_141397_1_2_1"/>
<dbReference type="InParanoid" id="O60220"/>
<dbReference type="OMA" id="DLCYTGT"/>
<dbReference type="OrthoDB" id="344165at2759"/>
<dbReference type="PAN-GO" id="O60220">
    <property type="GO annotations" value="0 GO annotations based on evolutionary models"/>
</dbReference>
<dbReference type="PhylomeDB" id="O60220"/>
<dbReference type="TreeFam" id="TF106191"/>
<dbReference type="PathwayCommons" id="O60220"/>
<dbReference type="Reactome" id="R-HSA-1268020">
    <property type="pathway name" value="Mitochondrial protein import"/>
</dbReference>
<dbReference type="SignaLink" id="O60220"/>
<dbReference type="BioGRID-ORCS" id="1678">
    <property type="hits" value="40 hits in 744 CRISPR screens"/>
</dbReference>
<dbReference type="CD-CODE" id="91857CE7">
    <property type="entry name" value="Nucleolus"/>
</dbReference>
<dbReference type="ChiTaRS" id="TIMM8A">
    <property type="organism name" value="human"/>
</dbReference>
<dbReference type="GeneWiki" id="TIMM8A"/>
<dbReference type="GenomeRNAi" id="1678"/>
<dbReference type="Pharos" id="O60220">
    <property type="development level" value="Tbio"/>
</dbReference>
<dbReference type="PRO" id="PR:O60220"/>
<dbReference type="Proteomes" id="UP000005640">
    <property type="component" value="Chromosome X"/>
</dbReference>
<dbReference type="RNAct" id="O60220">
    <property type="molecule type" value="protein"/>
</dbReference>
<dbReference type="Bgee" id="ENSG00000126953">
    <property type="expression patterns" value="Expressed in endothelial cell and 131 other cell types or tissues"/>
</dbReference>
<dbReference type="ExpressionAtlas" id="O60220">
    <property type="expression patterns" value="baseline and differential"/>
</dbReference>
<dbReference type="GO" id="GO:0005743">
    <property type="term" value="C:mitochondrial inner membrane"/>
    <property type="evidence" value="ECO:0007669"/>
    <property type="project" value="UniProtKB-SubCell"/>
</dbReference>
<dbReference type="GO" id="GO:0005758">
    <property type="term" value="C:mitochondrial intermembrane space"/>
    <property type="evidence" value="ECO:0000314"/>
    <property type="project" value="BHF-UCL"/>
</dbReference>
<dbReference type="GO" id="GO:0042719">
    <property type="term" value="C:mitochondrial intermembrane space protein transporter complex"/>
    <property type="evidence" value="ECO:0000353"/>
    <property type="project" value="FlyBase"/>
</dbReference>
<dbReference type="GO" id="GO:0005739">
    <property type="term" value="C:mitochondrion"/>
    <property type="evidence" value="ECO:0000314"/>
    <property type="project" value="HPA"/>
</dbReference>
<dbReference type="GO" id="GO:0042802">
    <property type="term" value="F:identical protein binding"/>
    <property type="evidence" value="ECO:0000353"/>
    <property type="project" value="IntAct"/>
</dbReference>
<dbReference type="GO" id="GO:0046872">
    <property type="term" value="F:metal ion binding"/>
    <property type="evidence" value="ECO:0007669"/>
    <property type="project" value="UniProtKB-KW"/>
</dbReference>
<dbReference type="GO" id="GO:0007399">
    <property type="term" value="P:nervous system development"/>
    <property type="evidence" value="ECO:0000304"/>
    <property type="project" value="ProtInc"/>
</dbReference>
<dbReference type="GO" id="GO:0045039">
    <property type="term" value="P:protein insertion into mitochondrial inner membrane"/>
    <property type="evidence" value="ECO:0000315"/>
    <property type="project" value="FlyBase"/>
</dbReference>
<dbReference type="FunFam" id="1.10.287.810:FF:000003">
    <property type="entry name" value="Mitochondrial import inner membrane translocase subunit TIM8"/>
    <property type="match status" value="1"/>
</dbReference>
<dbReference type="Gene3D" id="1.10.287.810">
    <property type="entry name" value="Mitochondrial import inner membrane translocase subunit tim13 like domains"/>
    <property type="match status" value="1"/>
</dbReference>
<dbReference type="InterPro" id="IPR004217">
    <property type="entry name" value="Tim10-like"/>
</dbReference>
<dbReference type="InterPro" id="IPR035427">
    <property type="entry name" value="Tim10-like_dom_sf"/>
</dbReference>
<dbReference type="Pfam" id="PF02953">
    <property type="entry name" value="zf-Tim10_DDP"/>
    <property type="match status" value="1"/>
</dbReference>
<dbReference type="SUPFAM" id="SSF144122">
    <property type="entry name" value="Tim10-like"/>
    <property type="match status" value="1"/>
</dbReference>
<sequence length="97" mass="10998">MDSSSSSSAAGLGAVDPQLQHFIEVETQKQRFQQLVHQMTELCWEKCMDKPGPKLDSRAEACFVNCVERFIDTSQFILNRLEQTQKSKPVFSESLSD</sequence>